<evidence type="ECO:0000255" key="1">
    <source>
        <dbReference type="HAMAP-Rule" id="MF_01318"/>
    </source>
</evidence>
<evidence type="ECO:0000305" key="2"/>
<comment type="function">
    <text evidence="1">Binds directly to 23S rRNA. The L1 stalk is quite mobile in the ribosome, and is involved in E site tRNA release.</text>
</comment>
<comment type="function">
    <text evidence="1">Protein L1 is also a translational repressor protein, it controls the translation of the L11 operon by binding to its mRNA.</text>
</comment>
<comment type="subunit">
    <text evidence="1">Part of the 50S ribosomal subunit.</text>
</comment>
<comment type="similarity">
    <text evidence="1">Belongs to the universal ribosomal protein uL1 family.</text>
</comment>
<organism>
    <name type="scientific">Streptococcus pyogenes serotype M1</name>
    <dbReference type="NCBI Taxonomy" id="301447"/>
    <lineage>
        <taxon>Bacteria</taxon>
        <taxon>Bacillati</taxon>
        <taxon>Bacillota</taxon>
        <taxon>Bacilli</taxon>
        <taxon>Lactobacillales</taxon>
        <taxon>Streptococcaceae</taxon>
        <taxon>Streptococcus</taxon>
    </lineage>
</organism>
<keyword id="KW-1185">Reference proteome</keyword>
<keyword id="KW-0678">Repressor</keyword>
<keyword id="KW-0687">Ribonucleoprotein</keyword>
<keyword id="KW-0689">Ribosomal protein</keyword>
<keyword id="KW-0694">RNA-binding</keyword>
<keyword id="KW-0699">rRNA-binding</keyword>
<keyword id="KW-0810">Translation regulation</keyword>
<keyword id="KW-0820">tRNA-binding</keyword>
<name>RL1_STRP1</name>
<gene>
    <name evidence="1" type="primary">rplA</name>
    <name type="ordered locus">SPy_0461</name>
    <name type="ordered locus">M5005_Spy0375</name>
</gene>
<proteinExistence type="inferred from homology"/>
<feature type="chain" id="PRO_0000125751" description="Large ribosomal subunit protein uL1">
    <location>
        <begin position="1"/>
        <end position="229"/>
    </location>
</feature>
<sequence length="229" mass="24394">MAKKSKQMRAALEKVDSTKAYSVEEAVALVKETNFAKFDASVEVAYNLNIDVRKADQQIRGAMVLPNGTGKTQRVLVFARGAKAEEAKAAGADFVGEDDLVAKINGGWLDFDVVIATPDMMAIVGRLGRVLGPRNLMPNPKTGTVTMDVAKAVEESKGGKITYRADKAGNVQALIGKVSFDADKLVENFKAFHDVMAKAKPATAKGTYMANVSITSTQGVGIKVDPNSL</sequence>
<protein>
    <recommendedName>
        <fullName evidence="1">Large ribosomal subunit protein uL1</fullName>
    </recommendedName>
    <alternativeName>
        <fullName evidence="2">50S ribosomal protein L1</fullName>
    </alternativeName>
</protein>
<reference key="1">
    <citation type="journal article" date="2001" name="Proc. Natl. Acad. Sci. U.S.A.">
        <title>Complete genome sequence of an M1 strain of Streptococcus pyogenes.</title>
        <authorList>
            <person name="Ferretti J.J."/>
            <person name="McShan W.M."/>
            <person name="Ajdic D.J."/>
            <person name="Savic D.J."/>
            <person name="Savic G."/>
            <person name="Lyon K."/>
            <person name="Primeaux C."/>
            <person name="Sezate S."/>
            <person name="Suvorov A.N."/>
            <person name="Kenton S."/>
            <person name="Lai H.S."/>
            <person name="Lin S.P."/>
            <person name="Qian Y."/>
            <person name="Jia H.G."/>
            <person name="Najar F.Z."/>
            <person name="Ren Q."/>
            <person name="Zhu H."/>
            <person name="Song L."/>
            <person name="White J."/>
            <person name="Yuan X."/>
            <person name="Clifton S.W."/>
            <person name="Roe B.A."/>
            <person name="McLaughlin R.E."/>
        </authorList>
    </citation>
    <scope>NUCLEOTIDE SEQUENCE [LARGE SCALE GENOMIC DNA]</scope>
    <source>
        <strain>ATCC 700294 / SF370 / Serotype M1</strain>
    </source>
</reference>
<reference key="2">
    <citation type="journal article" date="2005" name="J. Infect. Dis.">
        <title>Evolutionary origin and emergence of a highly successful clone of serotype M1 group A Streptococcus involved multiple horizontal gene transfer events.</title>
        <authorList>
            <person name="Sumby P."/>
            <person name="Porcella S.F."/>
            <person name="Madrigal A.G."/>
            <person name="Barbian K.D."/>
            <person name="Virtaneva K."/>
            <person name="Ricklefs S.M."/>
            <person name="Sturdevant D.E."/>
            <person name="Graham M.R."/>
            <person name="Vuopio-Varkila J."/>
            <person name="Hoe N.P."/>
            <person name="Musser J.M."/>
        </authorList>
    </citation>
    <scope>NUCLEOTIDE SEQUENCE [LARGE SCALE GENOMIC DNA]</scope>
    <source>
        <strain>ATCC BAA-947 / MGAS5005 / Serotype M1</strain>
    </source>
</reference>
<accession>P66097</accession>
<accession>Q490H5</accession>
<accession>Q9A152</accession>
<dbReference type="EMBL" id="AE004092">
    <property type="protein sequence ID" value="AAK33475.1"/>
    <property type="molecule type" value="Genomic_DNA"/>
</dbReference>
<dbReference type="EMBL" id="CP000017">
    <property type="protein sequence ID" value="AAZ50993.1"/>
    <property type="molecule type" value="Genomic_DNA"/>
</dbReference>
<dbReference type="RefSeq" id="NP_268754.1">
    <property type="nucleotide sequence ID" value="NC_002737.2"/>
</dbReference>
<dbReference type="SMR" id="P66097"/>
<dbReference type="PaxDb" id="1314-HKU360_00407"/>
<dbReference type="KEGG" id="spy:SPy_0461"/>
<dbReference type="KEGG" id="spz:M5005_Spy0375"/>
<dbReference type="PATRIC" id="fig|160490.10.peg.389"/>
<dbReference type="HOGENOM" id="CLU_062853_0_0_9"/>
<dbReference type="OMA" id="EFRVDKH"/>
<dbReference type="PRO" id="PR:P66097"/>
<dbReference type="Proteomes" id="UP000000750">
    <property type="component" value="Chromosome"/>
</dbReference>
<dbReference type="GO" id="GO:0015934">
    <property type="term" value="C:large ribosomal subunit"/>
    <property type="evidence" value="ECO:0007669"/>
    <property type="project" value="InterPro"/>
</dbReference>
<dbReference type="GO" id="GO:0019843">
    <property type="term" value="F:rRNA binding"/>
    <property type="evidence" value="ECO:0007669"/>
    <property type="project" value="UniProtKB-UniRule"/>
</dbReference>
<dbReference type="GO" id="GO:0003735">
    <property type="term" value="F:structural constituent of ribosome"/>
    <property type="evidence" value="ECO:0007669"/>
    <property type="project" value="InterPro"/>
</dbReference>
<dbReference type="GO" id="GO:0000049">
    <property type="term" value="F:tRNA binding"/>
    <property type="evidence" value="ECO:0007669"/>
    <property type="project" value="UniProtKB-KW"/>
</dbReference>
<dbReference type="GO" id="GO:0006417">
    <property type="term" value="P:regulation of translation"/>
    <property type="evidence" value="ECO:0007669"/>
    <property type="project" value="UniProtKB-KW"/>
</dbReference>
<dbReference type="GO" id="GO:0006412">
    <property type="term" value="P:translation"/>
    <property type="evidence" value="ECO:0007669"/>
    <property type="project" value="UniProtKB-UniRule"/>
</dbReference>
<dbReference type="CDD" id="cd00403">
    <property type="entry name" value="Ribosomal_L1"/>
    <property type="match status" value="1"/>
</dbReference>
<dbReference type="FunFam" id="3.40.50.790:FF:000001">
    <property type="entry name" value="50S ribosomal protein L1"/>
    <property type="match status" value="1"/>
</dbReference>
<dbReference type="Gene3D" id="3.30.190.20">
    <property type="match status" value="1"/>
</dbReference>
<dbReference type="Gene3D" id="3.40.50.790">
    <property type="match status" value="1"/>
</dbReference>
<dbReference type="HAMAP" id="MF_01318_B">
    <property type="entry name" value="Ribosomal_uL1_B"/>
    <property type="match status" value="1"/>
</dbReference>
<dbReference type="InterPro" id="IPR005878">
    <property type="entry name" value="Ribosom_uL1_bac-type"/>
</dbReference>
<dbReference type="InterPro" id="IPR002143">
    <property type="entry name" value="Ribosomal_uL1"/>
</dbReference>
<dbReference type="InterPro" id="IPR023674">
    <property type="entry name" value="Ribosomal_uL1-like"/>
</dbReference>
<dbReference type="InterPro" id="IPR028364">
    <property type="entry name" value="Ribosomal_uL1/biogenesis"/>
</dbReference>
<dbReference type="InterPro" id="IPR016095">
    <property type="entry name" value="Ribosomal_uL1_3-a/b-sand"/>
</dbReference>
<dbReference type="InterPro" id="IPR023673">
    <property type="entry name" value="Ribosomal_uL1_CS"/>
</dbReference>
<dbReference type="NCBIfam" id="TIGR01169">
    <property type="entry name" value="rplA_bact"/>
    <property type="match status" value="1"/>
</dbReference>
<dbReference type="PANTHER" id="PTHR36427">
    <property type="entry name" value="54S RIBOSOMAL PROTEIN L1, MITOCHONDRIAL"/>
    <property type="match status" value="1"/>
</dbReference>
<dbReference type="PANTHER" id="PTHR36427:SF3">
    <property type="entry name" value="LARGE RIBOSOMAL SUBUNIT PROTEIN UL1M"/>
    <property type="match status" value="1"/>
</dbReference>
<dbReference type="Pfam" id="PF00687">
    <property type="entry name" value="Ribosomal_L1"/>
    <property type="match status" value="1"/>
</dbReference>
<dbReference type="PIRSF" id="PIRSF002155">
    <property type="entry name" value="Ribosomal_L1"/>
    <property type="match status" value="1"/>
</dbReference>
<dbReference type="SUPFAM" id="SSF56808">
    <property type="entry name" value="Ribosomal protein L1"/>
    <property type="match status" value="1"/>
</dbReference>
<dbReference type="PROSITE" id="PS01199">
    <property type="entry name" value="RIBOSOMAL_L1"/>
    <property type="match status" value="1"/>
</dbReference>